<gene>
    <name evidence="1" type="primary">dapD</name>
    <name type="ordered locus">NMC1835</name>
</gene>
<feature type="chain" id="PRO_1000047153" description="2,3,4,5-tetrahydropyridine-2,6-dicarboxylate N-succinyltransferase">
    <location>
        <begin position="1"/>
        <end position="273"/>
    </location>
</feature>
<feature type="binding site" evidence="1">
    <location>
        <position position="104"/>
    </location>
    <ligand>
        <name>substrate</name>
    </ligand>
</feature>
<feature type="binding site" evidence="1">
    <location>
        <position position="141"/>
    </location>
    <ligand>
        <name>substrate</name>
    </ligand>
</feature>
<organism>
    <name type="scientific">Neisseria meningitidis serogroup C / serotype 2a (strain ATCC 700532 / DSM 15464 / FAM18)</name>
    <dbReference type="NCBI Taxonomy" id="272831"/>
    <lineage>
        <taxon>Bacteria</taxon>
        <taxon>Pseudomonadati</taxon>
        <taxon>Pseudomonadota</taxon>
        <taxon>Betaproteobacteria</taxon>
        <taxon>Neisseriales</taxon>
        <taxon>Neisseriaceae</taxon>
        <taxon>Neisseria</taxon>
    </lineage>
</organism>
<comment type="catalytic activity">
    <reaction evidence="1">
        <text>(S)-2,3,4,5-tetrahydrodipicolinate + succinyl-CoA + H2O = (S)-2-succinylamino-6-oxoheptanedioate + CoA</text>
        <dbReference type="Rhea" id="RHEA:17325"/>
        <dbReference type="ChEBI" id="CHEBI:15377"/>
        <dbReference type="ChEBI" id="CHEBI:15685"/>
        <dbReference type="ChEBI" id="CHEBI:16845"/>
        <dbReference type="ChEBI" id="CHEBI:57287"/>
        <dbReference type="ChEBI" id="CHEBI:57292"/>
        <dbReference type="EC" id="2.3.1.117"/>
    </reaction>
</comment>
<comment type="pathway">
    <text evidence="1">Amino-acid biosynthesis; L-lysine biosynthesis via DAP pathway; LL-2,6-diaminopimelate from (S)-tetrahydrodipicolinate (succinylase route): step 1/3.</text>
</comment>
<comment type="subunit">
    <text evidence="1">Homotrimer.</text>
</comment>
<comment type="subcellular location">
    <subcellularLocation>
        <location evidence="1">Cytoplasm</location>
    </subcellularLocation>
</comment>
<comment type="similarity">
    <text evidence="1">Belongs to the transferase hexapeptide repeat family.</text>
</comment>
<sequence>MSLQNIIETAFENRADITPTTVTPEVKEAVLETIRQLDSGKLRVAERLGVGEWKVNEWAKKAVLLSFRIQDNEVLNDGVNKYFDKVPTKFADWSEDEFKNAGFRAVPGAVARRGSFVAKNVVLMPSYVNIGAYVDEGAMVDTWATVGSCAQIGKNVHLSGGVGIGGVLEPLQAAPTIIEDNCFIGARSEIVEGVIVEEGSVISMGVFIGQSTKIFDRTTGEIYQGRVPTGSVVVSGSMPSKDGSHSLYCAVIVKRVDAQTRAKTSVNELLRGI</sequence>
<protein>
    <recommendedName>
        <fullName evidence="1">2,3,4,5-tetrahydropyridine-2,6-dicarboxylate N-succinyltransferase</fullName>
        <ecNumber evidence="1">2.3.1.117</ecNumber>
    </recommendedName>
    <alternativeName>
        <fullName evidence="1">Tetrahydrodipicolinate N-succinyltransferase</fullName>
        <shortName evidence="1">THDP succinyltransferase</shortName>
        <shortName evidence="1">THP succinyltransferase</shortName>
        <shortName evidence="1">Tetrahydropicolinate succinylase</shortName>
    </alternativeName>
</protein>
<proteinExistence type="inferred from homology"/>
<keyword id="KW-0012">Acyltransferase</keyword>
<keyword id="KW-0028">Amino-acid biosynthesis</keyword>
<keyword id="KW-0963">Cytoplasm</keyword>
<keyword id="KW-0220">Diaminopimelate biosynthesis</keyword>
<keyword id="KW-0457">Lysine biosynthesis</keyword>
<keyword id="KW-0677">Repeat</keyword>
<keyword id="KW-0808">Transferase</keyword>
<accession>A1KVU9</accession>
<reference key="1">
    <citation type="journal article" date="2007" name="PLoS Genet.">
        <title>Meningococcal genetic variation mechanisms viewed through comparative analysis of serogroup C strain FAM18.</title>
        <authorList>
            <person name="Bentley S.D."/>
            <person name="Vernikos G.S."/>
            <person name="Snyder L.A.S."/>
            <person name="Churcher C."/>
            <person name="Arrowsmith C."/>
            <person name="Chillingworth T."/>
            <person name="Cronin A."/>
            <person name="Davis P.H."/>
            <person name="Holroyd N.E."/>
            <person name="Jagels K."/>
            <person name="Maddison M."/>
            <person name="Moule S."/>
            <person name="Rabbinowitsch E."/>
            <person name="Sharp S."/>
            <person name="Unwin L."/>
            <person name="Whitehead S."/>
            <person name="Quail M.A."/>
            <person name="Achtman M."/>
            <person name="Barrell B.G."/>
            <person name="Saunders N.J."/>
            <person name="Parkhill J."/>
        </authorList>
    </citation>
    <scope>NUCLEOTIDE SEQUENCE [LARGE SCALE GENOMIC DNA]</scope>
    <source>
        <strain>ATCC 700532 / DSM 15464 / FAM18</strain>
    </source>
</reference>
<name>DAPD_NEIMF</name>
<evidence type="ECO:0000255" key="1">
    <source>
        <dbReference type="HAMAP-Rule" id="MF_00811"/>
    </source>
</evidence>
<dbReference type="EC" id="2.3.1.117" evidence="1"/>
<dbReference type="EMBL" id="AM421808">
    <property type="protein sequence ID" value="CAM11004.1"/>
    <property type="molecule type" value="Genomic_DNA"/>
</dbReference>
<dbReference type="RefSeq" id="WP_002220281.1">
    <property type="nucleotide sequence ID" value="NC_008767.1"/>
</dbReference>
<dbReference type="SMR" id="A1KVU9"/>
<dbReference type="KEGG" id="nmc:NMC1835"/>
<dbReference type="HOGENOM" id="CLU_050859_0_1_4"/>
<dbReference type="UniPathway" id="UPA00034">
    <property type="reaction ID" value="UER00019"/>
</dbReference>
<dbReference type="Proteomes" id="UP000002286">
    <property type="component" value="Chromosome"/>
</dbReference>
<dbReference type="GO" id="GO:0005737">
    <property type="term" value="C:cytoplasm"/>
    <property type="evidence" value="ECO:0007669"/>
    <property type="project" value="UniProtKB-SubCell"/>
</dbReference>
<dbReference type="GO" id="GO:0008666">
    <property type="term" value="F:2,3,4,5-tetrahydropyridine-2,6-dicarboxylate N-succinyltransferase activity"/>
    <property type="evidence" value="ECO:0007669"/>
    <property type="project" value="UniProtKB-UniRule"/>
</dbReference>
<dbReference type="GO" id="GO:0016779">
    <property type="term" value="F:nucleotidyltransferase activity"/>
    <property type="evidence" value="ECO:0007669"/>
    <property type="project" value="TreeGrafter"/>
</dbReference>
<dbReference type="GO" id="GO:0019877">
    <property type="term" value="P:diaminopimelate biosynthetic process"/>
    <property type="evidence" value="ECO:0007669"/>
    <property type="project" value="UniProtKB-UniRule"/>
</dbReference>
<dbReference type="GO" id="GO:0009089">
    <property type="term" value="P:lysine biosynthetic process via diaminopimelate"/>
    <property type="evidence" value="ECO:0007669"/>
    <property type="project" value="UniProtKB-UniRule"/>
</dbReference>
<dbReference type="CDD" id="cd03350">
    <property type="entry name" value="LbH_THP_succinylT"/>
    <property type="match status" value="1"/>
</dbReference>
<dbReference type="Gene3D" id="2.160.10.10">
    <property type="entry name" value="Hexapeptide repeat proteins"/>
    <property type="match status" value="1"/>
</dbReference>
<dbReference type="Gene3D" id="1.10.166.10">
    <property type="entry name" value="Tetrahydrodipicolinate-N-succinyltransferase, N-terminal domain"/>
    <property type="match status" value="1"/>
</dbReference>
<dbReference type="HAMAP" id="MF_00811">
    <property type="entry name" value="DapD"/>
    <property type="match status" value="1"/>
</dbReference>
<dbReference type="InterPro" id="IPR005664">
    <property type="entry name" value="DapD_Trfase_Hexpep_rpt_fam"/>
</dbReference>
<dbReference type="InterPro" id="IPR001451">
    <property type="entry name" value="Hexapep"/>
</dbReference>
<dbReference type="InterPro" id="IPR018357">
    <property type="entry name" value="Hexapep_transf_CS"/>
</dbReference>
<dbReference type="InterPro" id="IPR023180">
    <property type="entry name" value="THP_succinylTrfase_dom1"/>
</dbReference>
<dbReference type="InterPro" id="IPR037133">
    <property type="entry name" value="THP_succinylTrfase_N_sf"/>
</dbReference>
<dbReference type="InterPro" id="IPR011004">
    <property type="entry name" value="Trimer_LpxA-like_sf"/>
</dbReference>
<dbReference type="NCBIfam" id="TIGR00965">
    <property type="entry name" value="dapD"/>
    <property type="match status" value="1"/>
</dbReference>
<dbReference type="NCBIfam" id="NF008808">
    <property type="entry name" value="PRK11830.1"/>
    <property type="match status" value="1"/>
</dbReference>
<dbReference type="PANTHER" id="PTHR19136:SF52">
    <property type="entry name" value="2,3,4,5-TETRAHYDROPYRIDINE-2,6-DICARBOXYLATE N-SUCCINYLTRANSFERASE"/>
    <property type="match status" value="1"/>
</dbReference>
<dbReference type="PANTHER" id="PTHR19136">
    <property type="entry name" value="MOLYBDENUM COFACTOR GUANYLYLTRANSFERASE"/>
    <property type="match status" value="1"/>
</dbReference>
<dbReference type="Pfam" id="PF14602">
    <property type="entry name" value="Hexapep_2"/>
    <property type="match status" value="1"/>
</dbReference>
<dbReference type="Pfam" id="PF14805">
    <property type="entry name" value="THDPS_N_2"/>
    <property type="match status" value="1"/>
</dbReference>
<dbReference type="SUPFAM" id="SSF51161">
    <property type="entry name" value="Trimeric LpxA-like enzymes"/>
    <property type="match status" value="1"/>
</dbReference>
<dbReference type="PROSITE" id="PS00101">
    <property type="entry name" value="HEXAPEP_TRANSFERASES"/>
    <property type="match status" value="1"/>
</dbReference>